<accession>Q8ZTR2</accession>
<proteinExistence type="inferred from homology"/>
<evidence type="ECO:0000255" key="1">
    <source>
        <dbReference type="HAMAP-Rule" id="MF_01082"/>
    </source>
</evidence>
<gene>
    <name evidence="1" type="primary">truD</name>
    <name type="ordered locus">PAE3134</name>
</gene>
<reference key="1">
    <citation type="journal article" date="2002" name="Proc. Natl. Acad. Sci. U.S.A.">
        <title>Genome sequence of the hyperthermophilic crenarchaeon Pyrobaculum aerophilum.</title>
        <authorList>
            <person name="Fitz-Gibbon S.T."/>
            <person name="Ladner H."/>
            <person name="Kim U.-J."/>
            <person name="Stetter K.O."/>
            <person name="Simon M.I."/>
            <person name="Miller J.H."/>
        </authorList>
    </citation>
    <scope>NUCLEOTIDE SEQUENCE [LARGE SCALE GENOMIC DNA]</scope>
    <source>
        <strain>ATCC 51768 / DSM 7523 / JCM 9630 / CIP 104966 / NBRC 100827 / IM2</strain>
    </source>
</reference>
<keyword id="KW-0413">Isomerase</keyword>
<keyword id="KW-1185">Reference proteome</keyword>
<keyword id="KW-0819">tRNA processing</keyword>
<name>TRUD_PYRAE</name>
<feature type="chain" id="PRO_0000152550" description="Probable tRNA pseudouridine synthase D">
    <location>
        <begin position="1"/>
        <end position="413"/>
    </location>
</feature>
<feature type="domain" description="TRUD" evidence="1">
    <location>
        <begin position="167"/>
        <end position="370"/>
    </location>
</feature>
<feature type="active site" description="Nucleophile" evidence="1">
    <location>
        <position position="97"/>
    </location>
</feature>
<organism>
    <name type="scientific">Pyrobaculum aerophilum (strain ATCC 51768 / DSM 7523 / JCM 9630 / CIP 104966 / NBRC 100827 / IM2)</name>
    <dbReference type="NCBI Taxonomy" id="178306"/>
    <lineage>
        <taxon>Archaea</taxon>
        <taxon>Thermoproteota</taxon>
        <taxon>Thermoprotei</taxon>
        <taxon>Thermoproteales</taxon>
        <taxon>Thermoproteaceae</taxon>
        <taxon>Pyrobaculum</taxon>
    </lineage>
</organism>
<dbReference type="EC" id="5.4.99.27" evidence="1"/>
<dbReference type="EMBL" id="AE009441">
    <property type="protein sequence ID" value="AAL64697.1"/>
    <property type="molecule type" value="Genomic_DNA"/>
</dbReference>
<dbReference type="RefSeq" id="WP_011009165.1">
    <property type="nucleotide sequence ID" value="NC_003364.1"/>
</dbReference>
<dbReference type="SMR" id="Q8ZTR2"/>
<dbReference type="FunCoup" id="Q8ZTR2">
    <property type="interactions" value="33"/>
</dbReference>
<dbReference type="STRING" id="178306.PAE3134"/>
<dbReference type="EnsemblBacteria" id="AAL64697">
    <property type="protein sequence ID" value="AAL64697"/>
    <property type="gene ID" value="PAE3134"/>
</dbReference>
<dbReference type="GeneID" id="1463874"/>
<dbReference type="KEGG" id="pai:PAE3134"/>
<dbReference type="PATRIC" id="fig|178306.9.peg.2356"/>
<dbReference type="eggNOG" id="arCOG04252">
    <property type="taxonomic scope" value="Archaea"/>
</dbReference>
<dbReference type="HOGENOM" id="CLU_005281_4_1_2"/>
<dbReference type="InParanoid" id="Q8ZTR2"/>
<dbReference type="Proteomes" id="UP000002439">
    <property type="component" value="Chromosome"/>
</dbReference>
<dbReference type="GO" id="GO:0009982">
    <property type="term" value="F:pseudouridine synthase activity"/>
    <property type="evidence" value="ECO:0000318"/>
    <property type="project" value="GO_Central"/>
</dbReference>
<dbReference type="GO" id="GO:0003723">
    <property type="term" value="F:RNA binding"/>
    <property type="evidence" value="ECO:0007669"/>
    <property type="project" value="InterPro"/>
</dbReference>
<dbReference type="GO" id="GO:0160150">
    <property type="term" value="F:tRNA pseudouridine(13) synthase activity"/>
    <property type="evidence" value="ECO:0007669"/>
    <property type="project" value="UniProtKB-EC"/>
</dbReference>
<dbReference type="GO" id="GO:0001522">
    <property type="term" value="P:pseudouridine synthesis"/>
    <property type="evidence" value="ECO:0000318"/>
    <property type="project" value="GO_Central"/>
</dbReference>
<dbReference type="GO" id="GO:0031119">
    <property type="term" value="P:tRNA pseudouridine synthesis"/>
    <property type="evidence" value="ECO:0007669"/>
    <property type="project" value="UniProtKB-UniRule"/>
</dbReference>
<dbReference type="CDD" id="cd02576">
    <property type="entry name" value="PseudoU_synth_ScPUS7"/>
    <property type="match status" value="1"/>
</dbReference>
<dbReference type="FunFam" id="3.30.70.3160:FF:000001">
    <property type="entry name" value="Probable tRNA pseudouridine synthase D"/>
    <property type="match status" value="1"/>
</dbReference>
<dbReference type="Gene3D" id="1.10.1510.30">
    <property type="match status" value="1"/>
</dbReference>
<dbReference type="Gene3D" id="3.30.70.3160">
    <property type="match status" value="1"/>
</dbReference>
<dbReference type="Gene3D" id="3.30.2350.20">
    <property type="entry name" value="TruD, catalytic domain"/>
    <property type="match status" value="1"/>
</dbReference>
<dbReference type="HAMAP" id="MF_01082">
    <property type="entry name" value="TruD"/>
    <property type="match status" value="1"/>
</dbReference>
<dbReference type="InterPro" id="IPR020103">
    <property type="entry name" value="PsdUridine_synth_cat_dom_sf"/>
</dbReference>
<dbReference type="InterPro" id="IPR001656">
    <property type="entry name" value="PsdUridine_synth_TruD"/>
</dbReference>
<dbReference type="InterPro" id="IPR020119">
    <property type="entry name" value="PsdUridine_synth_TruD_CS"/>
</dbReference>
<dbReference type="InterPro" id="IPR011760">
    <property type="entry name" value="PsdUridine_synth_TruD_insert"/>
</dbReference>
<dbReference type="InterPro" id="IPR042214">
    <property type="entry name" value="TruD_catalytic"/>
</dbReference>
<dbReference type="NCBIfam" id="TIGR00094">
    <property type="entry name" value="tRNA_TruD_broad"/>
    <property type="match status" value="1"/>
</dbReference>
<dbReference type="PANTHER" id="PTHR13326:SF21">
    <property type="entry name" value="PSEUDOURIDYLATE SYNTHASE PUS7L"/>
    <property type="match status" value="1"/>
</dbReference>
<dbReference type="PANTHER" id="PTHR13326">
    <property type="entry name" value="TRNA PSEUDOURIDINE SYNTHASE D"/>
    <property type="match status" value="1"/>
</dbReference>
<dbReference type="Pfam" id="PF01142">
    <property type="entry name" value="TruD"/>
    <property type="match status" value="1"/>
</dbReference>
<dbReference type="PIRSF" id="PIRSF037016">
    <property type="entry name" value="Pseudouridin_synth_euk_prd"/>
    <property type="match status" value="1"/>
</dbReference>
<dbReference type="SUPFAM" id="SSF55120">
    <property type="entry name" value="Pseudouridine synthase"/>
    <property type="match status" value="1"/>
</dbReference>
<dbReference type="PROSITE" id="PS50984">
    <property type="entry name" value="TRUD"/>
    <property type="match status" value="1"/>
</dbReference>
<dbReference type="PROSITE" id="PS01268">
    <property type="entry name" value="UPF0024"/>
    <property type="match status" value="1"/>
</dbReference>
<comment type="function">
    <text evidence="1">Could be responsible for synthesis of pseudouridine from uracil-13 in transfer RNAs.</text>
</comment>
<comment type="catalytic activity">
    <reaction evidence="1">
        <text>uridine(13) in tRNA = pseudouridine(13) in tRNA</text>
        <dbReference type="Rhea" id="RHEA:42540"/>
        <dbReference type="Rhea" id="RHEA-COMP:10105"/>
        <dbReference type="Rhea" id="RHEA-COMP:10106"/>
        <dbReference type="ChEBI" id="CHEBI:65314"/>
        <dbReference type="ChEBI" id="CHEBI:65315"/>
        <dbReference type="EC" id="5.4.99.27"/>
    </reaction>
</comment>
<comment type="similarity">
    <text evidence="1">Belongs to the pseudouridine synthase TruD family.</text>
</comment>
<protein>
    <recommendedName>
        <fullName evidence="1">Probable tRNA pseudouridine synthase D</fullName>
        <ecNumber evidence="1">5.4.99.27</ecNumber>
    </recommendedName>
    <alternativeName>
        <fullName evidence="1">tRNA pseudouridine(13) synthase</fullName>
    </alternativeName>
    <alternativeName>
        <fullName evidence="1">tRNA pseudouridylate synthase D</fullName>
    </alternativeName>
    <alternativeName>
        <fullName evidence="1">tRNA-uridine isomerase D</fullName>
    </alternativeName>
</protein>
<sequence length="413" mass="46357">MLEAPSFDKMLGMFYYATDTCPSGGVIKRSPEDFVVEEVLLDGTVIATSGVELRPRVGNWTWIHVVKRNVDTIKLVLRLARALGLSHRDVSVGGLKDTKAVTSQIISVRGPVANLPQLPGVQFLGMWSMDKPITPSQIYGNRFTIILRDVERISCAEGALEALKKTAAPNYYGYQRFGTIRPVTHLLGKALLKKDPHLFFEVMFCKIFSRESEVAKRAREAACKGDYAKALELFPKKFVEERVFLKRLAGGYDMWNAIMAIPPQILRVYIEAAQSYIFNRFLSIRMEIGPIDRPVEGDLVEINRQIAYYAEGLGGEVVLPVVGAGVRMPRGKVGEALLRVLREEGLDPSAFLKMPRGLRVYGTYRRVRLEPAGFEYKIMGNDVFMQFTLPRGSYATVLLREVVKPAEPHKHGF</sequence>